<protein>
    <recommendedName>
        <fullName evidence="1">Nicotinate phosphoribosyltransferase</fullName>
        <shortName evidence="1">NAPRTase</shortName>
        <ecNumber evidence="1">6.3.4.21</ecNumber>
    </recommendedName>
</protein>
<feature type="chain" id="PRO_1000082324" description="Nicotinate phosphoribosyltransferase">
    <location>
        <begin position="1"/>
        <end position="434"/>
    </location>
</feature>
<feature type="modified residue" description="Phosphohistidine; by autocatalysis" evidence="1">
    <location>
        <position position="242"/>
    </location>
</feature>
<dbReference type="EC" id="6.3.4.21" evidence="1"/>
<dbReference type="EMBL" id="CP000911">
    <property type="protein sequence ID" value="ABY37221.1"/>
    <property type="molecule type" value="Genomic_DNA"/>
</dbReference>
<dbReference type="RefSeq" id="WP_002965361.1">
    <property type="nucleotide sequence ID" value="NC_010169.1"/>
</dbReference>
<dbReference type="SMR" id="B0CIM5"/>
<dbReference type="GeneID" id="97534468"/>
<dbReference type="KEGG" id="bmt:BSUIS_A0117"/>
<dbReference type="HOGENOM" id="CLU_030991_1_0_5"/>
<dbReference type="UniPathway" id="UPA00253">
    <property type="reaction ID" value="UER00457"/>
</dbReference>
<dbReference type="Proteomes" id="UP000008545">
    <property type="component" value="Chromosome I"/>
</dbReference>
<dbReference type="GO" id="GO:0005829">
    <property type="term" value="C:cytosol"/>
    <property type="evidence" value="ECO:0007669"/>
    <property type="project" value="TreeGrafter"/>
</dbReference>
<dbReference type="GO" id="GO:0004516">
    <property type="term" value="F:nicotinate phosphoribosyltransferase activity"/>
    <property type="evidence" value="ECO:0007669"/>
    <property type="project" value="UniProtKB-UniRule"/>
</dbReference>
<dbReference type="GO" id="GO:0034355">
    <property type="term" value="P:NAD biosynthetic process via the salvage pathway"/>
    <property type="evidence" value="ECO:0007669"/>
    <property type="project" value="TreeGrafter"/>
</dbReference>
<dbReference type="Gene3D" id="3.20.140.10">
    <property type="entry name" value="nicotinate phosphoribosyltransferase"/>
    <property type="match status" value="1"/>
</dbReference>
<dbReference type="HAMAP" id="MF_00570">
    <property type="entry name" value="NAPRTase"/>
    <property type="match status" value="1"/>
</dbReference>
<dbReference type="InterPro" id="IPR041525">
    <property type="entry name" value="N/Namide_PRibTrfase"/>
</dbReference>
<dbReference type="InterPro" id="IPR040727">
    <property type="entry name" value="NAPRTase_N"/>
</dbReference>
<dbReference type="InterPro" id="IPR006406">
    <property type="entry name" value="Nic_PRibTrfase"/>
</dbReference>
<dbReference type="InterPro" id="IPR007229">
    <property type="entry name" value="Nic_PRibTrfase-Fam"/>
</dbReference>
<dbReference type="InterPro" id="IPR036068">
    <property type="entry name" value="Nicotinate_pribotase-like_C"/>
</dbReference>
<dbReference type="NCBIfam" id="TIGR01514">
    <property type="entry name" value="NAPRTase"/>
    <property type="match status" value="1"/>
</dbReference>
<dbReference type="NCBIfam" id="NF003704">
    <property type="entry name" value="PRK05321.1"/>
    <property type="match status" value="1"/>
</dbReference>
<dbReference type="PANTHER" id="PTHR11098">
    <property type="entry name" value="NICOTINATE PHOSPHORIBOSYLTRANSFERASE"/>
    <property type="match status" value="1"/>
</dbReference>
<dbReference type="PANTHER" id="PTHR11098:SF1">
    <property type="entry name" value="NICOTINATE PHOSPHORIBOSYLTRANSFERASE"/>
    <property type="match status" value="1"/>
</dbReference>
<dbReference type="Pfam" id="PF04095">
    <property type="entry name" value="NAPRTase"/>
    <property type="match status" value="1"/>
</dbReference>
<dbReference type="Pfam" id="PF17767">
    <property type="entry name" value="NAPRTase_N"/>
    <property type="match status" value="1"/>
</dbReference>
<dbReference type="PIRSF" id="PIRSF000484">
    <property type="entry name" value="NAPRT"/>
    <property type="match status" value="1"/>
</dbReference>
<dbReference type="SUPFAM" id="SSF51690">
    <property type="entry name" value="Nicotinate/Quinolinate PRTase C-terminal domain-like"/>
    <property type="match status" value="1"/>
</dbReference>
<dbReference type="SUPFAM" id="SSF54675">
    <property type="entry name" value="Nicotinate/Quinolinate PRTase N-terminal domain-like"/>
    <property type="match status" value="1"/>
</dbReference>
<name>PNCB_BRUSI</name>
<sequence length="434" mass="49909">MAKTDLARRVYNHTWKLDPIIRSLLDTDFYKLLMLQMIWGLYPRVDATFSLINRTSSVRLADEIDEGELRAQLDHARTLRFSKKEMIWLAGNTFYGRKQIFQPEFLAWLHDFQLPEYELRRKDGQYELHFHGPWTHTTMWEIPALAIINELRSRAAMKNLGPFSLDVLYARAKAKMWSKVERLRQLPDLKISDFGTRRRHSFLWQRWCVEALKEGIGSAFTGTSNVLLAMDTDLEALGTNAHELPMVLAALAKTDDELRSAPYRVLQDWNRYYGGNLLIVLPDAFGTAAFLRNAPDWVADWTGFRPDSAPPIEGGERIIEWWKSKGKDPREKLLIFSDALDVDTIEETYRHFEGRVRMGFGWGTNLTNDFAGCAPQSIDGLKAISLVCKVTDANGHPAVKLSDNPQKATGDPKEVARYLRFFGNEERVEQLVRV</sequence>
<gene>
    <name evidence="1" type="primary">pncB</name>
    <name type="ordered locus">BSUIS_A0117</name>
</gene>
<keyword id="KW-0436">Ligase</keyword>
<keyword id="KW-0597">Phosphoprotein</keyword>
<keyword id="KW-0662">Pyridine nucleotide biosynthesis</keyword>
<comment type="function">
    <text evidence="1">Catalyzes the synthesis of beta-nicotinate D-ribonucleotide from nicotinate and 5-phospho-D-ribose 1-phosphate at the expense of ATP.</text>
</comment>
<comment type="catalytic activity">
    <reaction evidence="1">
        <text>nicotinate + 5-phospho-alpha-D-ribose 1-diphosphate + ATP + H2O = nicotinate beta-D-ribonucleotide + ADP + phosphate + diphosphate</text>
        <dbReference type="Rhea" id="RHEA:36163"/>
        <dbReference type="ChEBI" id="CHEBI:15377"/>
        <dbReference type="ChEBI" id="CHEBI:30616"/>
        <dbReference type="ChEBI" id="CHEBI:32544"/>
        <dbReference type="ChEBI" id="CHEBI:33019"/>
        <dbReference type="ChEBI" id="CHEBI:43474"/>
        <dbReference type="ChEBI" id="CHEBI:57502"/>
        <dbReference type="ChEBI" id="CHEBI:58017"/>
        <dbReference type="ChEBI" id="CHEBI:456216"/>
        <dbReference type="EC" id="6.3.4.21"/>
    </reaction>
</comment>
<comment type="pathway">
    <text evidence="1">Cofactor biosynthesis; NAD(+) biosynthesis; nicotinate D-ribonucleotide from nicotinate: step 1/1.</text>
</comment>
<comment type="PTM">
    <text evidence="1">Transiently phosphorylated on a His residue during the reaction cycle. Phosphorylation strongly increases the affinity for substrates and increases the rate of nicotinate D-ribonucleotide production. Dephosphorylation regenerates the low-affinity form of the enzyme, leading to product release.</text>
</comment>
<comment type="similarity">
    <text evidence="1">Belongs to the NAPRTase family.</text>
</comment>
<reference key="1">
    <citation type="submission" date="2007-12" db="EMBL/GenBank/DDBJ databases">
        <title>Brucella suis ATCC 23445 whole genome shotgun sequencing project.</title>
        <authorList>
            <person name="Setubal J.C."/>
            <person name="Bowns C."/>
            <person name="Boyle S."/>
            <person name="Crasta O.R."/>
            <person name="Czar M.J."/>
            <person name="Dharmanolla C."/>
            <person name="Gillespie J.J."/>
            <person name="Kenyon R.W."/>
            <person name="Lu J."/>
            <person name="Mane S."/>
            <person name="Mohapatra S."/>
            <person name="Nagrani S."/>
            <person name="Purkayastha A."/>
            <person name="Rajasimha H.K."/>
            <person name="Shallom J.M."/>
            <person name="Shallom S."/>
            <person name="Shukla M."/>
            <person name="Snyder E.E."/>
            <person name="Sobral B.W."/>
            <person name="Wattam A.R."/>
            <person name="Will R."/>
            <person name="Williams K."/>
            <person name="Yoo H."/>
            <person name="Bruce D."/>
            <person name="Detter C."/>
            <person name="Munk C."/>
            <person name="Brettin T.S."/>
        </authorList>
    </citation>
    <scope>NUCLEOTIDE SEQUENCE [LARGE SCALE GENOMIC DNA]</scope>
    <source>
        <strain>ATCC 23445 / NCTC 10510</strain>
    </source>
</reference>
<proteinExistence type="inferred from homology"/>
<organism>
    <name type="scientific">Brucella suis (strain ATCC 23445 / NCTC 10510)</name>
    <dbReference type="NCBI Taxonomy" id="470137"/>
    <lineage>
        <taxon>Bacteria</taxon>
        <taxon>Pseudomonadati</taxon>
        <taxon>Pseudomonadota</taxon>
        <taxon>Alphaproteobacteria</taxon>
        <taxon>Hyphomicrobiales</taxon>
        <taxon>Brucellaceae</taxon>
        <taxon>Brucella/Ochrobactrum group</taxon>
        <taxon>Brucella</taxon>
    </lineage>
</organism>
<evidence type="ECO:0000255" key="1">
    <source>
        <dbReference type="HAMAP-Rule" id="MF_00570"/>
    </source>
</evidence>
<accession>B0CIM5</accession>